<sequence>MGRAHEVRAASMAKTAAKKSAANGRASKEIYMAAKAGGSDPSSNLALRALIDKAKSNQIPKEVIDRAIKRATGGDAENYVSNRYEGMGPGNTAIIVDALTSNVNRAAANIREVFNKNHGNPEGKVAFMFEEVSMFAFKGKTEEEVLEQLMMSEVDVNDVEVEEDMIIVTAPYKSFNAVKHSLDELGIEEYLMSEIKLIPIDDYIEVSDAELKQQLQTLLDKLDELEDVQNVYHNATI</sequence>
<accession>Q6F0R9</accession>
<reference key="1">
    <citation type="submission" date="2004-06" db="EMBL/GenBank/DDBJ databases">
        <authorList>
            <person name="Birren B.W."/>
            <person name="Stange-Thomann N."/>
            <person name="Hafez N."/>
            <person name="DeCaprio D."/>
            <person name="Fisher S."/>
            <person name="Butler J."/>
            <person name="Elkins T."/>
            <person name="Kodira C.D."/>
            <person name="Major J."/>
            <person name="Wang S."/>
            <person name="Nicol R."/>
            <person name="Nusbaum C."/>
        </authorList>
    </citation>
    <scope>NUCLEOTIDE SEQUENCE [LARGE SCALE GENOMIC DNA]</scope>
    <source>
        <strain>ATCC 33453 / NBRC 100688 / NCTC 11704 / L1</strain>
    </source>
</reference>
<gene>
    <name type="ordered locus">Mfl546</name>
</gene>
<evidence type="ECO:0000255" key="1">
    <source>
        <dbReference type="HAMAP-Rule" id="MF_00693"/>
    </source>
</evidence>
<evidence type="ECO:0000256" key="2">
    <source>
        <dbReference type="SAM" id="MobiDB-lite"/>
    </source>
</evidence>
<keyword id="KW-0963">Cytoplasm</keyword>
<keyword id="KW-0238">DNA-binding</keyword>
<keyword id="KW-1185">Reference proteome</keyword>
<keyword id="KW-0804">Transcription</keyword>
<keyword id="KW-0805">Transcription regulation</keyword>
<organism>
    <name type="scientific">Mesoplasma florum (strain ATCC 33453 / NBRC 100688 / NCTC 11704 / L1)</name>
    <name type="common">Acholeplasma florum</name>
    <dbReference type="NCBI Taxonomy" id="265311"/>
    <lineage>
        <taxon>Bacteria</taxon>
        <taxon>Bacillati</taxon>
        <taxon>Mycoplasmatota</taxon>
        <taxon>Mollicutes</taxon>
        <taxon>Entomoplasmatales</taxon>
        <taxon>Entomoplasmataceae</taxon>
        <taxon>Mesoplasma</taxon>
    </lineage>
</organism>
<protein>
    <recommendedName>
        <fullName evidence="1">Probable transcriptional regulatory protein Mfl546</fullName>
    </recommendedName>
</protein>
<feature type="chain" id="PRO_0000175841" description="Probable transcriptional regulatory protein Mfl546">
    <location>
        <begin position="1"/>
        <end position="237"/>
    </location>
</feature>
<feature type="region of interest" description="Disordered" evidence="2">
    <location>
        <begin position="1"/>
        <end position="20"/>
    </location>
</feature>
<feature type="compositionally biased region" description="Low complexity" evidence="2">
    <location>
        <begin position="9"/>
        <end position="20"/>
    </location>
</feature>
<dbReference type="EMBL" id="AE017263">
    <property type="protein sequence ID" value="AAT75904.1"/>
    <property type="molecule type" value="Genomic_DNA"/>
</dbReference>
<dbReference type="RefSeq" id="WP_011183444.1">
    <property type="nucleotide sequence ID" value="NC_006055.1"/>
</dbReference>
<dbReference type="RefSeq" id="YP_053788.1">
    <property type="nucleotide sequence ID" value="NC_006055.1"/>
</dbReference>
<dbReference type="SMR" id="Q6F0R9"/>
<dbReference type="STRING" id="265311.Mfl546"/>
<dbReference type="PaxDb" id="265311-Mfl546"/>
<dbReference type="EnsemblBacteria" id="AAT75904">
    <property type="protein sequence ID" value="AAT75904"/>
    <property type="gene ID" value="Mfl546"/>
</dbReference>
<dbReference type="GeneID" id="2898009"/>
<dbReference type="KEGG" id="mfl:Mfl546"/>
<dbReference type="PATRIC" id="fig|265311.5.peg.550"/>
<dbReference type="eggNOG" id="COG0217">
    <property type="taxonomic scope" value="Bacteria"/>
</dbReference>
<dbReference type="HOGENOM" id="CLU_062974_2_0_14"/>
<dbReference type="OrthoDB" id="9781053at2"/>
<dbReference type="Proteomes" id="UP000006647">
    <property type="component" value="Chromosome"/>
</dbReference>
<dbReference type="GO" id="GO:0005829">
    <property type="term" value="C:cytosol"/>
    <property type="evidence" value="ECO:0007669"/>
    <property type="project" value="TreeGrafter"/>
</dbReference>
<dbReference type="GO" id="GO:0003677">
    <property type="term" value="F:DNA binding"/>
    <property type="evidence" value="ECO:0007669"/>
    <property type="project" value="UniProtKB-UniRule"/>
</dbReference>
<dbReference type="GO" id="GO:0006355">
    <property type="term" value="P:regulation of DNA-templated transcription"/>
    <property type="evidence" value="ECO:0007669"/>
    <property type="project" value="UniProtKB-UniRule"/>
</dbReference>
<dbReference type="Gene3D" id="1.10.10.200">
    <property type="match status" value="1"/>
</dbReference>
<dbReference type="Gene3D" id="3.30.70.980">
    <property type="match status" value="2"/>
</dbReference>
<dbReference type="HAMAP" id="MF_00693">
    <property type="entry name" value="Transcrip_reg_TACO1"/>
    <property type="match status" value="1"/>
</dbReference>
<dbReference type="InterPro" id="IPR017856">
    <property type="entry name" value="Integrase-like_N"/>
</dbReference>
<dbReference type="InterPro" id="IPR048300">
    <property type="entry name" value="TACO1_YebC-like_2nd/3rd_dom"/>
</dbReference>
<dbReference type="InterPro" id="IPR049083">
    <property type="entry name" value="TACO1_YebC_N"/>
</dbReference>
<dbReference type="InterPro" id="IPR002876">
    <property type="entry name" value="Transcrip_reg_TACO1-like"/>
</dbReference>
<dbReference type="InterPro" id="IPR026564">
    <property type="entry name" value="Transcrip_reg_TACO1-like_dom3"/>
</dbReference>
<dbReference type="InterPro" id="IPR029072">
    <property type="entry name" value="YebC-like"/>
</dbReference>
<dbReference type="NCBIfam" id="NF009044">
    <property type="entry name" value="PRK12378.1"/>
    <property type="match status" value="1"/>
</dbReference>
<dbReference type="PANTHER" id="PTHR12532">
    <property type="entry name" value="TRANSLATIONAL ACTIVATOR OF CYTOCHROME C OXIDASE 1"/>
    <property type="match status" value="1"/>
</dbReference>
<dbReference type="PANTHER" id="PTHR12532:SF0">
    <property type="entry name" value="TRANSLATIONAL ACTIVATOR OF CYTOCHROME C OXIDASE 1"/>
    <property type="match status" value="1"/>
</dbReference>
<dbReference type="Pfam" id="PF20772">
    <property type="entry name" value="TACO1_YebC_N"/>
    <property type="match status" value="1"/>
</dbReference>
<dbReference type="Pfam" id="PF01709">
    <property type="entry name" value="Transcrip_reg"/>
    <property type="match status" value="1"/>
</dbReference>
<dbReference type="SUPFAM" id="SSF75625">
    <property type="entry name" value="YebC-like"/>
    <property type="match status" value="1"/>
</dbReference>
<proteinExistence type="inferred from homology"/>
<comment type="subcellular location">
    <subcellularLocation>
        <location evidence="1">Cytoplasm</location>
    </subcellularLocation>
</comment>
<comment type="similarity">
    <text evidence="1">Belongs to the TACO1 family.</text>
</comment>
<name>Y546_MESFL</name>